<keyword id="KW-0028">Amino-acid biosynthesis</keyword>
<keyword id="KW-0963">Cytoplasm</keyword>
<keyword id="KW-0456">Lyase</keyword>
<keyword id="KW-0479">Metal-binding</keyword>
<keyword id="KW-0486">Methionine biosynthesis</keyword>
<keyword id="KW-1185">Reference proteome</keyword>
<keyword id="KW-0862">Zinc</keyword>
<proteinExistence type="inferred from homology"/>
<evidence type="ECO:0000255" key="1">
    <source>
        <dbReference type="HAMAP-Rule" id="MF_03116"/>
    </source>
</evidence>
<name>MTNB_TALSN</name>
<sequence length="255" mass="28853">MPEATNIQVVIASGLDNEENNDHLVQSSDPQHPANLIPEMCRKFYTWGWVTGTGGGTSIRHGDHIFIAPSGVQKELIQPENIFVMQFPTPKYPPSERKYIRKPKNLKPSDCTPLFLTAFERGAMCCIHTHSQWAVLVTLLVERIYGKEAHFEISNIEQIKGIPKGKGKGMHNYHDTLRIPIIDNTPFEEDLTEGLERAIAANPDTYAVLVRRHGIYVWGDTPAKAKTQCESLDWLFQLAVEMHKLGLPWDINKTK</sequence>
<dbReference type="EC" id="4.2.1.109" evidence="1"/>
<dbReference type="EMBL" id="EQ962652">
    <property type="protein sequence ID" value="EED24522.1"/>
    <property type="molecule type" value="Genomic_DNA"/>
</dbReference>
<dbReference type="RefSeq" id="XP_002341909.1">
    <property type="nucleotide sequence ID" value="XM_002341868.1"/>
</dbReference>
<dbReference type="SMR" id="B8LXM1"/>
<dbReference type="FunCoup" id="B8LXM1">
    <property type="interactions" value="251"/>
</dbReference>
<dbReference type="STRING" id="441959.B8LXM1"/>
<dbReference type="GeneID" id="8104412"/>
<dbReference type="VEuPathDB" id="FungiDB:TSTA_078770"/>
<dbReference type="eggNOG" id="KOG2631">
    <property type="taxonomic scope" value="Eukaryota"/>
</dbReference>
<dbReference type="HOGENOM" id="CLU_006033_4_0_1"/>
<dbReference type="InParanoid" id="B8LXM1"/>
<dbReference type="OMA" id="WFPGTSG"/>
<dbReference type="OrthoDB" id="191080at2759"/>
<dbReference type="PhylomeDB" id="B8LXM1"/>
<dbReference type="UniPathway" id="UPA00904">
    <property type="reaction ID" value="UER00875"/>
</dbReference>
<dbReference type="Proteomes" id="UP000001745">
    <property type="component" value="Unassembled WGS sequence"/>
</dbReference>
<dbReference type="GO" id="GO:0005737">
    <property type="term" value="C:cytoplasm"/>
    <property type="evidence" value="ECO:0007669"/>
    <property type="project" value="UniProtKB-SubCell"/>
</dbReference>
<dbReference type="GO" id="GO:0046570">
    <property type="term" value="F:methylthioribulose 1-phosphate dehydratase activity"/>
    <property type="evidence" value="ECO:0007669"/>
    <property type="project" value="UniProtKB-UniRule"/>
</dbReference>
<dbReference type="GO" id="GO:0008270">
    <property type="term" value="F:zinc ion binding"/>
    <property type="evidence" value="ECO:0007669"/>
    <property type="project" value="UniProtKB-UniRule"/>
</dbReference>
<dbReference type="GO" id="GO:0019509">
    <property type="term" value="P:L-methionine salvage from methylthioadenosine"/>
    <property type="evidence" value="ECO:0007669"/>
    <property type="project" value="UniProtKB-UniRule"/>
</dbReference>
<dbReference type="FunFam" id="3.40.225.10:FF:000003">
    <property type="entry name" value="Methylthioribulose-1-phosphate dehydratase"/>
    <property type="match status" value="1"/>
</dbReference>
<dbReference type="Gene3D" id="3.40.225.10">
    <property type="entry name" value="Class II aldolase/adducin N-terminal domain"/>
    <property type="match status" value="1"/>
</dbReference>
<dbReference type="HAMAP" id="MF_03116">
    <property type="entry name" value="Salvage_MtnB_euk"/>
    <property type="match status" value="1"/>
</dbReference>
<dbReference type="InterPro" id="IPR001303">
    <property type="entry name" value="Aldolase_II/adducin_N"/>
</dbReference>
<dbReference type="InterPro" id="IPR036409">
    <property type="entry name" value="Aldolase_II/adducin_N_sf"/>
</dbReference>
<dbReference type="InterPro" id="IPR017714">
    <property type="entry name" value="MethylthioRu-1-P_deHdtase_MtnB"/>
</dbReference>
<dbReference type="InterPro" id="IPR027514">
    <property type="entry name" value="Salvage_MtnB_euk"/>
</dbReference>
<dbReference type="NCBIfam" id="TIGR03328">
    <property type="entry name" value="salvage_mtnB"/>
    <property type="match status" value="1"/>
</dbReference>
<dbReference type="PANTHER" id="PTHR10640">
    <property type="entry name" value="METHYLTHIORIBULOSE-1-PHOSPHATE DEHYDRATASE"/>
    <property type="match status" value="1"/>
</dbReference>
<dbReference type="PANTHER" id="PTHR10640:SF7">
    <property type="entry name" value="METHYLTHIORIBULOSE-1-PHOSPHATE DEHYDRATASE"/>
    <property type="match status" value="1"/>
</dbReference>
<dbReference type="Pfam" id="PF00596">
    <property type="entry name" value="Aldolase_II"/>
    <property type="match status" value="1"/>
</dbReference>
<dbReference type="SMART" id="SM01007">
    <property type="entry name" value="Aldolase_II"/>
    <property type="match status" value="1"/>
</dbReference>
<dbReference type="SUPFAM" id="SSF53639">
    <property type="entry name" value="AraD/HMP-PK domain-like"/>
    <property type="match status" value="1"/>
</dbReference>
<protein>
    <recommendedName>
        <fullName evidence="1">Methylthioribulose-1-phosphate dehydratase</fullName>
        <shortName evidence="1">MTRu-1-P dehydratase</shortName>
        <ecNumber evidence="1">4.2.1.109</ecNumber>
    </recommendedName>
</protein>
<comment type="function">
    <text evidence="1">Catalyzes the dehydration of methylthioribulose-1-phosphate (MTRu-1-P) into 2,3-diketo-5-methylthiopentyl-1-phosphate (DK-MTP-1-P).</text>
</comment>
<comment type="catalytic activity">
    <reaction evidence="1">
        <text>5-(methylsulfanyl)-D-ribulose 1-phosphate = 5-methylsulfanyl-2,3-dioxopentyl phosphate + H2O</text>
        <dbReference type="Rhea" id="RHEA:15549"/>
        <dbReference type="ChEBI" id="CHEBI:15377"/>
        <dbReference type="ChEBI" id="CHEBI:58548"/>
        <dbReference type="ChEBI" id="CHEBI:58828"/>
        <dbReference type="EC" id="4.2.1.109"/>
    </reaction>
</comment>
<comment type="cofactor">
    <cofactor evidence="1">
        <name>Zn(2+)</name>
        <dbReference type="ChEBI" id="CHEBI:29105"/>
    </cofactor>
    <text evidence="1">Binds 1 zinc ion per subunit.</text>
</comment>
<comment type="pathway">
    <text evidence="1">Amino-acid biosynthesis; L-methionine biosynthesis via salvage pathway; L-methionine from S-methyl-5-thio-alpha-D-ribose 1-phosphate: step 2/6.</text>
</comment>
<comment type="subcellular location">
    <subcellularLocation>
        <location evidence="1">Cytoplasm</location>
    </subcellularLocation>
</comment>
<comment type="similarity">
    <text evidence="1">Belongs to the aldolase class II family. MtnB subfamily.</text>
</comment>
<organism>
    <name type="scientific">Talaromyces stipitatus (strain ATCC 10500 / CBS 375.48 / QM 6759 / NRRL 1006)</name>
    <name type="common">Penicillium stipitatum</name>
    <dbReference type="NCBI Taxonomy" id="441959"/>
    <lineage>
        <taxon>Eukaryota</taxon>
        <taxon>Fungi</taxon>
        <taxon>Dikarya</taxon>
        <taxon>Ascomycota</taxon>
        <taxon>Pezizomycotina</taxon>
        <taxon>Eurotiomycetes</taxon>
        <taxon>Eurotiomycetidae</taxon>
        <taxon>Eurotiales</taxon>
        <taxon>Trichocomaceae</taxon>
        <taxon>Talaromyces</taxon>
        <taxon>Talaromyces sect. Talaromyces</taxon>
    </lineage>
</organism>
<feature type="chain" id="PRO_0000393853" description="Methylthioribulose-1-phosphate dehydratase">
    <location>
        <begin position="1"/>
        <end position="255"/>
    </location>
</feature>
<feature type="active site" description="Proton donor/acceptor" evidence="1">
    <location>
        <position position="157"/>
    </location>
</feature>
<feature type="binding site" evidence="1">
    <location>
        <position position="111"/>
    </location>
    <ligand>
        <name>substrate</name>
    </ligand>
</feature>
<feature type="binding site" evidence="1">
    <location>
        <position position="128"/>
    </location>
    <ligand>
        <name>Zn(2+)</name>
        <dbReference type="ChEBI" id="CHEBI:29105"/>
    </ligand>
</feature>
<feature type="binding site" evidence="1">
    <location>
        <position position="130"/>
    </location>
    <ligand>
        <name>Zn(2+)</name>
        <dbReference type="ChEBI" id="CHEBI:29105"/>
    </ligand>
</feature>
<feature type="binding site" evidence="1">
    <location>
        <position position="213"/>
    </location>
    <ligand>
        <name>Zn(2+)</name>
        <dbReference type="ChEBI" id="CHEBI:29105"/>
    </ligand>
</feature>
<accession>B8LXM1</accession>
<gene>
    <name evidence="1" type="primary">mde1</name>
    <name type="ORF">TSTA_078770</name>
</gene>
<reference key="1">
    <citation type="journal article" date="2015" name="Genome Announc.">
        <title>Genome sequence of the AIDS-associated pathogen Penicillium marneffei (ATCC18224) and its near taxonomic relative Talaromyces stipitatus (ATCC10500).</title>
        <authorList>
            <person name="Nierman W.C."/>
            <person name="Fedorova-Abrams N.D."/>
            <person name="Andrianopoulos A."/>
        </authorList>
    </citation>
    <scope>NUCLEOTIDE SEQUENCE [LARGE SCALE GENOMIC DNA]</scope>
    <source>
        <strain>ATCC 10500 / CBS 375.48 / QM 6759 / NRRL 1006</strain>
    </source>
</reference>